<protein>
    <recommendedName>
        <fullName>Uncharacterized protein YhcC</fullName>
    </recommendedName>
</protein>
<organism>
    <name type="scientific">Bacillus subtilis (strain 168)</name>
    <dbReference type="NCBI Taxonomy" id="224308"/>
    <lineage>
        <taxon>Bacteria</taxon>
        <taxon>Bacillati</taxon>
        <taxon>Bacillota</taxon>
        <taxon>Bacilli</taxon>
        <taxon>Bacillales</taxon>
        <taxon>Bacillaceae</taxon>
        <taxon>Bacillus</taxon>
    </lineage>
</organism>
<evidence type="ECO:0000255" key="1"/>
<evidence type="ECO:0000256" key="2">
    <source>
        <dbReference type="SAM" id="MobiDB-lite"/>
    </source>
</evidence>
<evidence type="ECO:0000305" key="3"/>
<sequence length="124" mass="13958">MAIIIAIIAAVIVIAALITFNVRNASPGPEKQEATDRIAPPEEEKNEAHYPAEARAAEHTPSVVKNDSPKEKRDTMGDDIYRQALQKFKHSDEVHAEEEVTEESDKMQDRSYRDALLSMKNKKK</sequence>
<gene>
    <name type="primary">yhcC</name>
    <name type="ordered locus">BSU09030</name>
</gene>
<keyword id="KW-0472">Membrane</keyword>
<keyword id="KW-1185">Reference proteome</keyword>
<keyword id="KW-0812">Transmembrane</keyword>
<keyword id="KW-1133">Transmembrane helix</keyword>
<name>YHCC_BACSU</name>
<accession>P54587</accession>
<feature type="chain" id="PRO_0000049557" description="Uncharacterized protein YhcC">
    <location>
        <begin position="1"/>
        <end position="124"/>
    </location>
</feature>
<feature type="transmembrane region" description="Helical" evidence="1">
    <location>
        <begin position="2"/>
        <end position="22"/>
    </location>
</feature>
<feature type="region of interest" description="Disordered" evidence="2">
    <location>
        <begin position="24"/>
        <end position="124"/>
    </location>
</feature>
<feature type="compositionally biased region" description="Basic and acidic residues" evidence="2">
    <location>
        <begin position="30"/>
        <end position="58"/>
    </location>
</feature>
<feature type="compositionally biased region" description="Basic and acidic residues" evidence="2">
    <location>
        <begin position="67"/>
        <end position="81"/>
    </location>
</feature>
<feature type="compositionally biased region" description="Basic and acidic residues" evidence="2">
    <location>
        <begin position="89"/>
        <end position="113"/>
    </location>
</feature>
<proteinExistence type="predicted"/>
<reference key="1">
    <citation type="journal article" date="1996" name="Microbiology">
        <title>A 22 kb DNA sequence in the cspB-glpPFKD region at 75 degrees on the Bacillus subtilis chromosome.</title>
        <authorList>
            <person name="Noback M.A."/>
            <person name="Terpstra P."/>
            <person name="Holsappel S."/>
            <person name="Venema G."/>
            <person name="Bron S."/>
        </authorList>
    </citation>
    <scope>NUCLEOTIDE SEQUENCE [GENOMIC DNA]</scope>
    <source>
        <strain>168</strain>
    </source>
</reference>
<reference key="2">
    <citation type="journal article" date="1997" name="Nature">
        <title>The complete genome sequence of the Gram-positive bacterium Bacillus subtilis.</title>
        <authorList>
            <person name="Kunst F."/>
            <person name="Ogasawara N."/>
            <person name="Moszer I."/>
            <person name="Albertini A.M."/>
            <person name="Alloni G."/>
            <person name="Azevedo V."/>
            <person name="Bertero M.G."/>
            <person name="Bessieres P."/>
            <person name="Bolotin A."/>
            <person name="Borchert S."/>
            <person name="Borriss R."/>
            <person name="Boursier L."/>
            <person name="Brans A."/>
            <person name="Braun M."/>
            <person name="Brignell S.C."/>
            <person name="Bron S."/>
            <person name="Brouillet S."/>
            <person name="Bruschi C.V."/>
            <person name="Caldwell B."/>
            <person name="Capuano V."/>
            <person name="Carter N.M."/>
            <person name="Choi S.-K."/>
            <person name="Codani J.-J."/>
            <person name="Connerton I.F."/>
            <person name="Cummings N.J."/>
            <person name="Daniel R.A."/>
            <person name="Denizot F."/>
            <person name="Devine K.M."/>
            <person name="Duesterhoeft A."/>
            <person name="Ehrlich S.D."/>
            <person name="Emmerson P.T."/>
            <person name="Entian K.-D."/>
            <person name="Errington J."/>
            <person name="Fabret C."/>
            <person name="Ferrari E."/>
            <person name="Foulger D."/>
            <person name="Fritz C."/>
            <person name="Fujita M."/>
            <person name="Fujita Y."/>
            <person name="Fuma S."/>
            <person name="Galizzi A."/>
            <person name="Galleron N."/>
            <person name="Ghim S.-Y."/>
            <person name="Glaser P."/>
            <person name="Goffeau A."/>
            <person name="Golightly E.J."/>
            <person name="Grandi G."/>
            <person name="Guiseppi G."/>
            <person name="Guy B.J."/>
            <person name="Haga K."/>
            <person name="Haiech J."/>
            <person name="Harwood C.R."/>
            <person name="Henaut A."/>
            <person name="Hilbert H."/>
            <person name="Holsappel S."/>
            <person name="Hosono S."/>
            <person name="Hullo M.-F."/>
            <person name="Itaya M."/>
            <person name="Jones L.-M."/>
            <person name="Joris B."/>
            <person name="Karamata D."/>
            <person name="Kasahara Y."/>
            <person name="Klaerr-Blanchard M."/>
            <person name="Klein C."/>
            <person name="Kobayashi Y."/>
            <person name="Koetter P."/>
            <person name="Koningstein G."/>
            <person name="Krogh S."/>
            <person name="Kumano M."/>
            <person name="Kurita K."/>
            <person name="Lapidus A."/>
            <person name="Lardinois S."/>
            <person name="Lauber J."/>
            <person name="Lazarevic V."/>
            <person name="Lee S.-M."/>
            <person name="Levine A."/>
            <person name="Liu H."/>
            <person name="Masuda S."/>
            <person name="Mauel C."/>
            <person name="Medigue C."/>
            <person name="Medina N."/>
            <person name="Mellado R.P."/>
            <person name="Mizuno M."/>
            <person name="Moestl D."/>
            <person name="Nakai S."/>
            <person name="Noback M."/>
            <person name="Noone D."/>
            <person name="O'Reilly M."/>
            <person name="Ogawa K."/>
            <person name="Ogiwara A."/>
            <person name="Oudega B."/>
            <person name="Park S.-H."/>
            <person name="Parro V."/>
            <person name="Pohl T.M."/>
            <person name="Portetelle D."/>
            <person name="Porwollik S."/>
            <person name="Prescott A.M."/>
            <person name="Presecan E."/>
            <person name="Pujic P."/>
            <person name="Purnelle B."/>
            <person name="Rapoport G."/>
            <person name="Rey M."/>
            <person name="Reynolds S."/>
            <person name="Rieger M."/>
            <person name="Rivolta C."/>
            <person name="Rocha E."/>
            <person name="Roche B."/>
            <person name="Rose M."/>
            <person name="Sadaie Y."/>
            <person name="Sato T."/>
            <person name="Scanlan E."/>
            <person name="Schleich S."/>
            <person name="Schroeter R."/>
            <person name="Scoffone F."/>
            <person name="Sekiguchi J."/>
            <person name="Sekowska A."/>
            <person name="Seror S.J."/>
            <person name="Serror P."/>
            <person name="Shin B.-S."/>
            <person name="Soldo B."/>
            <person name="Sorokin A."/>
            <person name="Tacconi E."/>
            <person name="Takagi T."/>
            <person name="Takahashi H."/>
            <person name="Takemaru K."/>
            <person name="Takeuchi M."/>
            <person name="Tamakoshi A."/>
            <person name="Tanaka T."/>
            <person name="Terpstra P."/>
            <person name="Tognoni A."/>
            <person name="Tosato V."/>
            <person name="Uchiyama S."/>
            <person name="Vandenbol M."/>
            <person name="Vannier F."/>
            <person name="Vassarotti A."/>
            <person name="Viari A."/>
            <person name="Wambutt R."/>
            <person name="Wedler E."/>
            <person name="Wedler H."/>
            <person name="Weitzenegger T."/>
            <person name="Winters P."/>
            <person name="Wipat A."/>
            <person name="Yamamoto H."/>
            <person name="Yamane K."/>
            <person name="Yasumoto K."/>
            <person name="Yata K."/>
            <person name="Yoshida K."/>
            <person name="Yoshikawa H.-F."/>
            <person name="Zumstein E."/>
            <person name="Yoshikawa H."/>
            <person name="Danchin A."/>
        </authorList>
    </citation>
    <scope>NUCLEOTIDE SEQUENCE [LARGE SCALE GENOMIC DNA]</scope>
    <source>
        <strain>168</strain>
    </source>
</reference>
<dbReference type="EMBL" id="X96983">
    <property type="protein sequence ID" value="CAA65686.1"/>
    <property type="molecule type" value="Genomic_DNA"/>
</dbReference>
<dbReference type="EMBL" id="AL009126">
    <property type="protein sequence ID" value="CAB12731.1"/>
    <property type="molecule type" value="Genomic_DNA"/>
</dbReference>
<dbReference type="PIR" id="G69821">
    <property type="entry name" value="G69821"/>
</dbReference>
<dbReference type="RefSeq" id="NP_388784.1">
    <property type="nucleotide sequence ID" value="NC_000964.3"/>
</dbReference>
<dbReference type="RefSeq" id="WP_003233427.1">
    <property type="nucleotide sequence ID" value="NZ_OZ025638.1"/>
</dbReference>
<dbReference type="SMR" id="P54587"/>
<dbReference type="FunCoup" id="P54587">
    <property type="interactions" value="107"/>
</dbReference>
<dbReference type="STRING" id="224308.BSU09030"/>
<dbReference type="PaxDb" id="224308-BSU09030"/>
<dbReference type="DNASU" id="936220"/>
<dbReference type="EnsemblBacteria" id="CAB12731">
    <property type="protein sequence ID" value="CAB12731"/>
    <property type="gene ID" value="BSU_09030"/>
</dbReference>
<dbReference type="GeneID" id="936220"/>
<dbReference type="KEGG" id="bsu:BSU09030"/>
<dbReference type="PATRIC" id="fig|224308.179.peg.976"/>
<dbReference type="eggNOG" id="ENOG502ZJN4">
    <property type="taxonomic scope" value="Bacteria"/>
</dbReference>
<dbReference type="InParanoid" id="P54587"/>
<dbReference type="OrthoDB" id="2935530at2"/>
<dbReference type="BioCyc" id="BSUB:BSU09030-MONOMER"/>
<dbReference type="Proteomes" id="UP000001570">
    <property type="component" value="Chromosome"/>
</dbReference>
<dbReference type="GO" id="GO:0016020">
    <property type="term" value="C:membrane"/>
    <property type="evidence" value="ECO:0007669"/>
    <property type="project" value="UniProtKB-SubCell"/>
</dbReference>
<comment type="subcellular location">
    <subcellularLocation>
        <location evidence="3">Membrane</location>
        <topology evidence="3">Single-pass membrane protein</topology>
    </subcellularLocation>
</comment>